<reference key="1">
    <citation type="journal article" date="2013" name="PLoS ONE">
        <title>Isolation and Characterization of a Single-Stranded DNA Virus Infecting the Marine Diatom Chaetoceros sp. Strain SS628-11 Isolated from Western Japan.</title>
        <authorList>
            <person name="Kimura K."/>
            <person name="Tomaru Y."/>
        </authorList>
    </citation>
    <scope>NUCLEOTIDE SEQUENCE [LARGE SCALE GENOMIC DNA]</scope>
    <source>
        <strain>Csp07DNAV</strain>
    </source>
</reference>
<dbReference type="EMBL" id="AB844272">
    <property type="protein sequence ID" value="BAO48206.1"/>
    <property type="molecule type" value="Genomic_DNA"/>
</dbReference>
<dbReference type="RefSeq" id="YP_009001775.1">
    <property type="nucleotide sequence ID" value="NC_023441.1"/>
</dbReference>
<dbReference type="GeneID" id="18266920"/>
<dbReference type="KEGG" id="vg:18266920"/>
<dbReference type="Proteomes" id="UP000052105">
    <property type="component" value="Segment"/>
</dbReference>
<proteinExistence type="predicted"/>
<feature type="chain" id="PRO_0000445643" description="Viral protein 1">
    <location>
        <begin position="1"/>
        <end position="210"/>
    </location>
</feature>
<organismHost>
    <name type="scientific">Chaetoceros</name>
    <dbReference type="NCBI Taxonomy" id="49237"/>
</organismHost>
<name>VP1_CPBDV</name>
<protein>
    <recommendedName>
        <fullName>Viral protein 1</fullName>
        <shortName>VP1</shortName>
    </recommendedName>
</protein>
<accession>W6JHZ8</accession>
<sequence>MNVKGASDKAQLAMQAEWEEVLAPEGALAVEEASSVLKISDDERRSYAAYIDNIIQENEIDVVYGHSRGAAIASELESDVQIIGLDGAMVIANDQANFLNIRQDDSEGYGFDRTIAGPYENTVIVKGGAFHKVAVPEGYHTKKPKASQEALERAKARKHNRARHIARAIDRLTARKTDKELEEIYWRERRKKNKNEFSKALIEFIEEQLL</sequence>
<organism>
    <name type="scientific">Chaetoceros protobacilladnavirus 2</name>
    <name type="common">Chaetoceros sp. DNA virus 7</name>
    <dbReference type="NCBI Taxonomy" id="3052702"/>
    <lineage>
        <taxon>Viruses</taxon>
        <taxon>Monodnaviria</taxon>
        <taxon>Shotokuvirae</taxon>
        <taxon>Cressdnaviricota</taxon>
        <taxon>Arfiviricetes</taxon>
        <taxon>Baphyvirales</taxon>
        <taxon>Bacilladnaviridae</taxon>
        <taxon>Protobacilladnavirus</taxon>
    </lineage>
</organism>
<keyword id="KW-1185">Reference proteome</keyword>